<organism>
    <name type="scientific">Mycobacterium tuberculosis (strain ATCC 25618 / H37Rv)</name>
    <dbReference type="NCBI Taxonomy" id="83332"/>
    <lineage>
        <taxon>Bacteria</taxon>
        <taxon>Bacillati</taxon>
        <taxon>Actinomycetota</taxon>
        <taxon>Actinomycetes</taxon>
        <taxon>Mycobacteriales</taxon>
        <taxon>Mycobacteriaceae</taxon>
        <taxon>Mycobacterium</taxon>
        <taxon>Mycobacterium tuberculosis complex</taxon>
    </lineage>
</organism>
<proteinExistence type="inferred from homology"/>
<keyword id="KW-1185">Reference proteome</keyword>
<gene>
    <name type="primary">PPE23</name>
    <name type="ordered locus">Rv1706c</name>
</gene>
<sequence>MTLDVPVNQGHVPPGSVACCLVGVTAVADGIAGHSLSNFGALPPEINSGRMYSGPGSGPLMAAAAAWDGLAAELSSAATGYGAAISELTNMRWWSGPASDSMVAAVLPFVGWLSTTATLAEQAAMQARAAAAAFEAAFAMTVPPPAIAANRTLLMTLVDTNWFGQNTPAIATTESQYAEMWAQDAAAMYGYASAAAPATVLTPFAPPPQTTNATGLVGHATAVAALRGQHSWAAAIPWSDIQKYWMMFLGALATAEGFIYDSGGLTLNALQFVGGMLWSTALAEAGAAEAAAGAGGAAGWSAWSQLGAGPVAASATLAAKIGPMSVPPGWSAPPATPQAQTVARSIPGIRSAAEAAETSVLLRGAPTPGRSRAAHMGRRYGRRLTVMADRPNVG</sequence>
<reference key="1">
    <citation type="journal article" date="1998" name="Nature">
        <title>Deciphering the biology of Mycobacterium tuberculosis from the complete genome sequence.</title>
        <authorList>
            <person name="Cole S.T."/>
            <person name="Brosch R."/>
            <person name="Parkhill J."/>
            <person name="Garnier T."/>
            <person name="Churcher C.M."/>
            <person name="Harris D.E."/>
            <person name="Gordon S.V."/>
            <person name="Eiglmeier K."/>
            <person name="Gas S."/>
            <person name="Barry C.E. III"/>
            <person name="Tekaia F."/>
            <person name="Badcock K."/>
            <person name="Basham D."/>
            <person name="Brown D."/>
            <person name="Chillingworth T."/>
            <person name="Connor R."/>
            <person name="Davies R.M."/>
            <person name="Devlin K."/>
            <person name="Feltwell T."/>
            <person name="Gentles S."/>
            <person name="Hamlin N."/>
            <person name="Holroyd S."/>
            <person name="Hornsby T."/>
            <person name="Jagels K."/>
            <person name="Krogh A."/>
            <person name="McLean J."/>
            <person name="Moule S."/>
            <person name="Murphy L.D."/>
            <person name="Oliver S."/>
            <person name="Osborne J."/>
            <person name="Quail M.A."/>
            <person name="Rajandream M.A."/>
            <person name="Rogers J."/>
            <person name="Rutter S."/>
            <person name="Seeger K."/>
            <person name="Skelton S."/>
            <person name="Squares S."/>
            <person name="Squares R."/>
            <person name="Sulston J.E."/>
            <person name="Taylor K."/>
            <person name="Whitehead S."/>
            <person name="Barrell B.G."/>
        </authorList>
    </citation>
    <scope>NUCLEOTIDE SEQUENCE [LARGE SCALE GENOMIC DNA]</scope>
    <source>
        <strain>ATCC 25618 / H37Rv</strain>
    </source>
</reference>
<reference key="2">
    <citation type="journal article" date="2008" name="BMC Syst. Biol.">
        <title>targetTB: a target identification pipeline for Mycobacterium tuberculosis through an interactome, reactome and genome-scale structural analysis.</title>
        <authorList>
            <person name="Raman K."/>
            <person name="Yeturu K."/>
            <person name="Chandra N."/>
        </authorList>
    </citation>
    <scope>IDENTIFICATION AS A DRUG TARGET [LARGE SCALE ANALYSIS]</scope>
</reference>
<comment type="miscellaneous">
    <text>Was identified as a high-confidence drug target.</text>
</comment>
<comment type="similarity">
    <text evidence="1">Belongs to the mycobacterial PPE family.</text>
</comment>
<evidence type="ECO:0000305" key="1"/>
<dbReference type="EMBL" id="AL123456">
    <property type="protein sequence ID" value="CCP44471.1"/>
    <property type="molecule type" value="Genomic_DNA"/>
</dbReference>
<dbReference type="PIR" id="A70504">
    <property type="entry name" value="A70504"/>
</dbReference>
<dbReference type="RefSeq" id="WP_003898980.1">
    <property type="nucleotide sequence ID" value="NZ_NVQJ01000010.1"/>
</dbReference>
<dbReference type="RefSeq" id="YP_177828.1">
    <property type="nucleotide sequence ID" value="NC_000962.3"/>
</dbReference>
<dbReference type="SMR" id="P9WI17"/>
<dbReference type="STRING" id="83332.Rv1706c"/>
<dbReference type="PaxDb" id="83332-Rv1706c"/>
<dbReference type="DNASU" id="885070"/>
<dbReference type="GeneID" id="885070"/>
<dbReference type="KEGG" id="mtu:Rv1706c"/>
<dbReference type="KEGG" id="mtv:RVBD_1706c"/>
<dbReference type="TubercuList" id="Rv1706c"/>
<dbReference type="eggNOG" id="COG5651">
    <property type="taxonomic scope" value="Bacteria"/>
</dbReference>
<dbReference type="InParanoid" id="P9WI17"/>
<dbReference type="OrthoDB" id="4764793at2"/>
<dbReference type="PhylomeDB" id="P9WI17"/>
<dbReference type="Proteomes" id="UP000001584">
    <property type="component" value="Chromosome"/>
</dbReference>
<dbReference type="GO" id="GO:0052572">
    <property type="term" value="P:response to host immune response"/>
    <property type="evidence" value="ECO:0000318"/>
    <property type="project" value="GO_Central"/>
</dbReference>
<dbReference type="FunFam" id="1.20.1260.20:FF:000001">
    <property type="entry name" value="PPE family protein PPE41"/>
    <property type="match status" value="1"/>
</dbReference>
<dbReference type="Gene3D" id="1.20.1260.20">
    <property type="entry name" value="PPE superfamily"/>
    <property type="match status" value="1"/>
</dbReference>
<dbReference type="InterPro" id="IPR022171">
    <property type="entry name" value="PPE_C"/>
</dbReference>
<dbReference type="InterPro" id="IPR000030">
    <property type="entry name" value="PPE_dom"/>
</dbReference>
<dbReference type="InterPro" id="IPR038332">
    <property type="entry name" value="PPE_sf"/>
</dbReference>
<dbReference type="PANTHER" id="PTHR46766">
    <property type="entry name" value="GLUTAMINE-RICH PROTEIN 2"/>
    <property type="match status" value="1"/>
</dbReference>
<dbReference type="PANTHER" id="PTHR46766:SF1">
    <property type="entry name" value="GLUTAMINE-RICH PROTEIN 2"/>
    <property type="match status" value="1"/>
</dbReference>
<dbReference type="Pfam" id="PF00823">
    <property type="entry name" value="PPE"/>
    <property type="match status" value="1"/>
</dbReference>
<dbReference type="Pfam" id="PF12484">
    <property type="entry name" value="PPE-SVP"/>
    <property type="match status" value="1"/>
</dbReference>
<dbReference type="SUPFAM" id="SSF140459">
    <property type="entry name" value="PE/PPE dimer-like"/>
    <property type="match status" value="1"/>
</dbReference>
<accession>P9WI17</accession>
<accession>L0T7F9</accession>
<accession>Q79FL5</accession>
<accession>Q7D842</accession>
<name>PPE23_MYCTU</name>
<feature type="chain" id="PRO_0000378479" description="Uncharacterized PPE family protein PPE23">
    <location>
        <begin position="1"/>
        <end position="394"/>
    </location>
</feature>
<protein>
    <recommendedName>
        <fullName>Uncharacterized PPE family protein PPE23</fullName>
    </recommendedName>
</protein>